<sequence>MKAKRMTDLDLTGKRVLIREDLNVPIKDGQVADDTRVRAAAESIRQAMQAGGRVLVMSHLGRPKEGEYDAEASMAPVARRLGEILGCEVPVVRDWLEGVDVPEGGVALAENVRFQPGETKDDEALSRRMAALCDVFVMDAFGTAHRAQASTHGVARFAPEACAGPLLSAELEALGKALDNPARPMIAIVGGSKVSGKVQVLEALTHKVDQLIVGGGIANTFIAAAGYSVGKSLYEADFVDTAKRLMEEARAKGGEIPIPEDVVTARDFSADAEAHVHPVDAVPDDEMILDVGPQTRARYDGMLRNAGTVVWNGPVGVFEMAPFAGGTRALAEAIAASDGFSIAGGGDTLAAVEQFGITDQVSYISTGGGAFLEFLEGRVLPGVAALEQHAAAHS</sequence>
<gene>
    <name evidence="1" type="primary">pgk</name>
    <name type="ordered locus">Hhal_1041</name>
</gene>
<evidence type="ECO:0000255" key="1">
    <source>
        <dbReference type="HAMAP-Rule" id="MF_00145"/>
    </source>
</evidence>
<organism>
    <name type="scientific">Halorhodospira halophila (strain DSM 244 / SL1)</name>
    <name type="common">Ectothiorhodospira halophila (strain DSM 244 / SL1)</name>
    <dbReference type="NCBI Taxonomy" id="349124"/>
    <lineage>
        <taxon>Bacteria</taxon>
        <taxon>Pseudomonadati</taxon>
        <taxon>Pseudomonadota</taxon>
        <taxon>Gammaproteobacteria</taxon>
        <taxon>Chromatiales</taxon>
        <taxon>Ectothiorhodospiraceae</taxon>
        <taxon>Halorhodospira</taxon>
    </lineage>
</organism>
<proteinExistence type="inferred from homology"/>
<accession>A1WVV5</accession>
<feature type="chain" id="PRO_1000058003" description="Phosphoglycerate kinase">
    <location>
        <begin position="1"/>
        <end position="394"/>
    </location>
</feature>
<feature type="binding site" evidence="1">
    <location>
        <begin position="21"/>
        <end position="23"/>
    </location>
    <ligand>
        <name>substrate</name>
    </ligand>
</feature>
<feature type="binding site" evidence="1">
    <location>
        <position position="36"/>
    </location>
    <ligand>
        <name>substrate</name>
    </ligand>
</feature>
<feature type="binding site" evidence="1">
    <location>
        <begin position="59"/>
        <end position="62"/>
    </location>
    <ligand>
        <name>substrate</name>
    </ligand>
</feature>
<feature type="binding site" evidence="1">
    <location>
        <position position="113"/>
    </location>
    <ligand>
        <name>substrate</name>
    </ligand>
</feature>
<feature type="binding site" evidence="1">
    <location>
        <position position="146"/>
    </location>
    <ligand>
        <name>substrate</name>
    </ligand>
</feature>
<feature type="binding site" evidence="1">
    <location>
        <position position="197"/>
    </location>
    <ligand>
        <name>ATP</name>
        <dbReference type="ChEBI" id="CHEBI:30616"/>
    </ligand>
</feature>
<feature type="binding site" evidence="1">
    <location>
        <position position="319"/>
    </location>
    <ligand>
        <name>ATP</name>
        <dbReference type="ChEBI" id="CHEBI:30616"/>
    </ligand>
</feature>
<feature type="binding site" evidence="1">
    <location>
        <begin position="345"/>
        <end position="348"/>
    </location>
    <ligand>
        <name>ATP</name>
        <dbReference type="ChEBI" id="CHEBI:30616"/>
    </ligand>
</feature>
<reference key="1">
    <citation type="submission" date="2006-12" db="EMBL/GenBank/DDBJ databases">
        <title>Complete sequence of Halorhodospira halophila SL1.</title>
        <authorList>
            <consortium name="US DOE Joint Genome Institute"/>
            <person name="Copeland A."/>
            <person name="Lucas S."/>
            <person name="Lapidus A."/>
            <person name="Barry K."/>
            <person name="Detter J.C."/>
            <person name="Glavina del Rio T."/>
            <person name="Hammon N."/>
            <person name="Israni S."/>
            <person name="Dalin E."/>
            <person name="Tice H."/>
            <person name="Pitluck S."/>
            <person name="Saunders E."/>
            <person name="Brettin T."/>
            <person name="Bruce D."/>
            <person name="Han C."/>
            <person name="Tapia R."/>
            <person name="Schmutz J."/>
            <person name="Larimer F."/>
            <person name="Land M."/>
            <person name="Hauser L."/>
            <person name="Kyrpides N."/>
            <person name="Mikhailova N."/>
            <person name="Hoff W."/>
            <person name="Richardson P."/>
        </authorList>
    </citation>
    <scope>NUCLEOTIDE SEQUENCE [LARGE SCALE GENOMIC DNA]</scope>
    <source>
        <strain>DSM 244 / SL1</strain>
    </source>
</reference>
<protein>
    <recommendedName>
        <fullName evidence="1">Phosphoglycerate kinase</fullName>
        <ecNumber evidence="1">2.7.2.3</ecNumber>
    </recommendedName>
</protein>
<name>PGK_HALHL</name>
<keyword id="KW-0067">ATP-binding</keyword>
<keyword id="KW-0963">Cytoplasm</keyword>
<keyword id="KW-0324">Glycolysis</keyword>
<keyword id="KW-0418">Kinase</keyword>
<keyword id="KW-0547">Nucleotide-binding</keyword>
<keyword id="KW-1185">Reference proteome</keyword>
<keyword id="KW-0808">Transferase</keyword>
<comment type="catalytic activity">
    <reaction evidence="1">
        <text>(2R)-3-phosphoglycerate + ATP = (2R)-3-phospho-glyceroyl phosphate + ADP</text>
        <dbReference type="Rhea" id="RHEA:14801"/>
        <dbReference type="ChEBI" id="CHEBI:30616"/>
        <dbReference type="ChEBI" id="CHEBI:57604"/>
        <dbReference type="ChEBI" id="CHEBI:58272"/>
        <dbReference type="ChEBI" id="CHEBI:456216"/>
        <dbReference type="EC" id="2.7.2.3"/>
    </reaction>
</comment>
<comment type="pathway">
    <text evidence="1">Carbohydrate degradation; glycolysis; pyruvate from D-glyceraldehyde 3-phosphate: step 2/5.</text>
</comment>
<comment type="subunit">
    <text evidence="1">Monomer.</text>
</comment>
<comment type="subcellular location">
    <subcellularLocation>
        <location evidence="1">Cytoplasm</location>
    </subcellularLocation>
</comment>
<comment type="similarity">
    <text evidence="1">Belongs to the phosphoglycerate kinase family.</text>
</comment>
<dbReference type="EC" id="2.7.2.3" evidence="1"/>
<dbReference type="EMBL" id="CP000544">
    <property type="protein sequence ID" value="ABM61817.1"/>
    <property type="molecule type" value="Genomic_DNA"/>
</dbReference>
<dbReference type="RefSeq" id="WP_011813840.1">
    <property type="nucleotide sequence ID" value="NC_008789.1"/>
</dbReference>
<dbReference type="SMR" id="A1WVV5"/>
<dbReference type="STRING" id="349124.Hhal_1041"/>
<dbReference type="KEGG" id="hha:Hhal_1041"/>
<dbReference type="eggNOG" id="COG0126">
    <property type="taxonomic scope" value="Bacteria"/>
</dbReference>
<dbReference type="HOGENOM" id="CLU_025427_0_2_6"/>
<dbReference type="OrthoDB" id="9808460at2"/>
<dbReference type="UniPathway" id="UPA00109">
    <property type="reaction ID" value="UER00185"/>
</dbReference>
<dbReference type="Proteomes" id="UP000000647">
    <property type="component" value="Chromosome"/>
</dbReference>
<dbReference type="GO" id="GO:0005829">
    <property type="term" value="C:cytosol"/>
    <property type="evidence" value="ECO:0007669"/>
    <property type="project" value="TreeGrafter"/>
</dbReference>
<dbReference type="GO" id="GO:0043531">
    <property type="term" value="F:ADP binding"/>
    <property type="evidence" value="ECO:0007669"/>
    <property type="project" value="TreeGrafter"/>
</dbReference>
<dbReference type="GO" id="GO:0005524">
    <property type="term" value="F:ATP binding"/>
    <property type="evidence" value="ECO:0007669"/>
    <property type="project" value="UniProtKB-KW"/>
</dbReference>
<dbReference type="GO" id="GO:0004618">
    <property type="term" value="F:phosphoglycerate kinase activity"/>
    <property type="evidence" value="ECO:0007669"/>
    <property type="project" value="UniProtKB-UniRule"/>
</dbReference>
<dbReference type="GO" id="GO:0006094">
    <property type="term" value="P:gluconeogenesis"/>
    <property type="evidence" value="ECO:0007669"/>
    <property type="project" value="TreeGrafter"/>
</dbReference>
<dbReference type="GO" id="GO:0006096">
    <property type="term" value="P:glycolytic process"/>
    <property type="evidence" value="ECO:0007669"/>
    <property type="project" value="UniProtKB-UniRule"/>
</dbReference>
<dbReference type="FunFam" id="3.40.50.1260:FF:000001">
    <property type="entry name" value="Phosphoglycerate kinase"/>
    <property type="match status" value="1"/>
</dbReference>
<dbReference type="FunFam" id="3.40.50.1260:FF:000002">
    <property type="entry name" value="Phosphoglycerate kinase"/>
    <property type="match status" value="1"/>
</dbReference>
<dbReference type="Gene3D" id="3.40.50.1260">
    <property type="entry name" value="Phosphoglycerate kinase, N-terminal domain"/>
    <property type="match status" value="2"/>
</dbReference>
<dbReference type="HAMAP" id="MF_00145">
    <property type="entry name" value="Phosphoglyc_kinase"/>
    <property type="match status" value="1"/>
</dbReference>
<dbReference type="InterPro" id="IPR001576">
    <property type="entry name" value="Phosphoglycerate_kinase"/>
</dbReference>
<dbReference type="InterPro" id="IPR015911">
    <property type="entry name" value="Phosphoglycerate_kinase_CS"/>
</dbReference>
<dbReference type="InterPro" id="IPR015824">
    <property type="entry name" value="Phosphoglycerate_kinase_N"/>
</dbReference>
<dbReference type="InterPro" id="IPR036043">
    <property type="entry name" value="Phosphoglycerate_kinase_sf"/>
</dbReference>
<dbReference type="PANTHER" id="PTHR11406">
    <property type="entry name" value="PHOSPHOGLYCERATE KINASE"/>
    <property type="match status" value="1"/>
</dbReference>
<dbReference type="PANTHER" id="PTHR11406:SF23">
    <property type="entry name" value="PHOSPHOGLYCERATE KINASE 1, CHLOROPLASTIC-RELATED"/>
    <property type="match status" value="1"/>
</dbReference>
<dbReference type="Pfam" id="PF00162">
    <property type="entry name" value="PGK"/>
    <property type="match status" value="1"/>
</dbReference>
<dbReference type="PIRSF" id="PIRSF000724">
    <property type="entry name" value="Pgk"/>
    <property type="match status" value="1"/>
</dbReference>
<dbReference type="PRINTS" id="PR00477">
    <property type="entry name" value="PHGLYCKINASE"/>
</dbReference>
<dbReference type="SUPFAM" id="SSF53748">
    <property type="entry name" value="Phosphoglycerate kinase"/>
    <property type="match status" value="1"/>
</dbReference>
<dbReference type="PROSITE" id="PS00111">
    <property type="entry name" value="PGLYCERATE_KINASE"/>
    <property type="match status" value="1"/>
</dbReference>